<organism>
    <name type="scientific">Salmonella agona (strain SL483)</name>
    <dbReference type="NCBI Taxonomy" id="454166"/>
    <lineage>
        <taxon>Bacteria</taxon>
        <taxon>Pseudomonadati</taxon>
        <taxon>Pseudomonadota</taxon>
        <taxon>Gammaproteobacteria</taxon>
        <taxon>Enterobacterales</taxon>
        <taxon>Enterobacteriaceae</taxon>
        <taxon>Salmonella</taxon>
    </lineage>
</organism>
<keyword id="KW-0963">Cytoplasm</keyword>
<keyword id="KW-0210">Decarboxylase</keyword>
<keyword id="KW-0456">Lyase</keyword>
<keyword id="KW-0627">Porphyrin biosynthesis</keyword>
<sequence>MTELKNDRYLRALLRQPVDVTPVWMMRQAGRYLPEYKATRAQAGDFMSLCKNAELACEVTLQPLRRYPLDAAILFSDILTIPDAMGLGLYFEAGEGPRFTAPVTCKADVDKLPIPDPEDELGYVMNAVRTIRRELKGEVPLIGFSGSPWTLATYMVEGGSSKAFTVIKKMMYADPQALHLLLDKLAKSVTLYLNAQIKAGAQSVMIFDTWGGVLTGRDYQQFSLYYMHKIVDGLLRENDGRRVPVTLFTKGGGQWLEAMAETGCDALGLDWTTDIADARRRVGHKVALQGNMDPSMLYAPPARIEDEVATILAGFGQGEGHVFNLGHGIHQDVPPEHAGAFVEAVHQLSAQYHN</sequence>
<name>DCUP_SALA4</name>
<reference key="1">
    <citation type="journal article" date="2011" name="J. Bacteriol.">
        <title>Comparative genomics of 28 Salmonella enterica isolates: evidence for CRISPR-mediated adaptive sublineage evolution.</title>
        <authorList>
            <person name="Fricke W.F."/>
            <person name="Mammel M.K."/>
            <person name="McDermott P.F."/>
            <person name="Tartera C."/>
            <person name="White D.G."/>
            <person name="Leclerc J.E."/>
            <person name="Ravel J."/>
            <person name="Cebula T.A."/>
        </authorList>
    </citation>
    <scope>NUCLEOTIDE SEQUENCE [LARGE SCALE GENOMIC DNA]</scope>
    <source>
        <strain>SL483</strain>
    </source>
</reference>
<proteinExistence type="inferred from homology"/>
<protein>
    <recommendedName>
        <fullName evidence="1">Uroporphyrinogen decarboxylase</fullName>
        <shortName evidence="1">UPD</shortName>
        <shortName evidence="1">URO-D</shortName>
        <ecNumber evidence="1">4.1.1.37</ecNumber>
    </recommendedName>
</protein>
<feature type="chain" id="PRO_1000100011" description="Uroporphyrinogen decarboxylase">
    <location>
        <begin position="1"/>
        <end position="354"/>
    </location>
</feature>
<feature type="binding site" evidence="1">
    <location>
        <begin position="27"/>
        <end position="31"/>
    </location>
    <ligand>
        <name>substrate</name>
    </ligand>
</feature>
<feature type="binding site" evidence="1">
    <location>
        <position position="77"/>
    </location>
    <ligand>
        <name>substrate</name>
    </ligand>
</feature>
<feature type="binding site" evidence="1">
    <location>
        <position position="154"/>
    </location>
    <ligand>
        <name>substrate</name>
    </ligand>
</feature>
<feature type="binding site" evidence="1">
    <location>
        <position position="209"/>
    </location>
    <ligand>
        <name>substrate</name>
    </ligand>
</feature>
<feature type="binding site" evidence="1">
    <location>
        <position position="327"/>
    </location>
    <ligand>
        <name>substrate</name>
    </ligand>
</feature>
<feature type="site" description="Transition state stabilizer" evidence="1">
    <location>
        <position position="77"/>
    </location>
</feature>
<dbReference type="EC" id="4.1.1.37" evidence="1"/>
<dbReference type="EMBL" id="CP001138">
    <property type="protein sequence ID" value="ACH48501.1"/>
    <property type="molecule type" value="Genomic_DNA"/>
</dbReference>
<dbReference type="RefSeq" id="WP_000137618.1">
    <property type="nucleotide sequence ID" value="NC_011149.1"/>
</dbReference>
<dbReference type="SMR" id="B5F1I0"/>
<dbReference type="KEGG" id="sea:SeAg_B4411"/>
<dbReference type="HOGENOM" id="CLU_040933_0_0_6"/>
<dbReference type="UniPathway" id="UPA00251">
    <property type="reaction ID" value="UER00321"/>
</dbReference>
<dbReference type="Proteomes" id="UP000008819">
    <property type="component" value="Chromosome"/>
</dbReference>
<dbReference type="GO" id="GO:0005829">
    <property type="term" value="C:cytosol"/>
    <property type="evidence" value="ECO:0007669"/>
    <property type="project" value="TreeGrafter"/>
</dbReference>
<dbReference type="GO" id="GO:0004853">
    <property type="term" value="F:uroporphyrinogen decarboxylase activity"/>
    <property type="evidence" value="ECO:0007669"/>
    <property type="project" value="UniProtKB-UniRule"/>
</dbReference>
<dbReference type="GO" id="GO:0019353">
    <property type="term" value="P:protoporphyrinogen IX biosynthetic process from glutamate"/>
    <property type="evidence" value="ECO:0007669"/>
    <property type="project" value="TreeGrafter"/>
</dbReference>
<dbReference type="CDD" id="cd00717">
    <property type="entry name" value="URO-D"/>
    <property type="match status" value="1"/>
</dbReference>
<dbReference type="FunFam" id="3.20.20.210:FF:000001">
    <property type="entry name" value="Uroporphyrinogen decarboxylase"/>
    <property type="match status" value="1"/>
</dbReference>
<dbReference type="Gene3D" id="3.20.20.210">
    <property type="match status" value="1"/>
</dbReference>
<dbReference type="HAMAP" id="MF_00218">
    <property type="entry name" value="URO_D"/>
    <property type="match status" value="1"/>
</dbReference>
<dbReference type="InterPro" id="IPR038071">
    <property type="entry name" value="UROD/MetE-like_sf"/>
</dbReference>
<dbReference type="InterPro" id="IPR006361">
    <property type="entry name" value="Uroporphyrinogen_deCO2ase_HemE"/>
</dbReference>
<dbReference type="InterPro" id="IPR000257">
    <property type="entry name" value="Uroporphyrinogen_deCOase"/>
</dbReference>
<dbReference type="NCBIfam" id="TIGR01464">
    <property type="entry name" value="hemE"/>
    <property type="match status" value="1"/>
</dbReference>
<dbReference type="PANTHER" id="PTHR21091">
    <property type="entry name" value="METHYLTETRAHYDROFOLATE:HOMOCYSTEINE METHYLTRANSFERASE RELATED"/>
    <property type="match status" value="1"/>
</dbReference>
<dbReference type="PANTHER" id="PTHR21091:SF169">
    <property type="entry name" value="UROPORPHYRINOGEN DECARBOXYLASE"/>
    <property type="match status" value="1"/>
</dbReference>
<dbReference type="Pfam" id="PF01208">
    <property type="entry name" value="URO-D"/>
    <property type="match status" value="1"/>
</dbReference>
<dbReference type="SUPFAM" id="SSF51726">
    <property type="entry name" value="UROD/MetE-like"/>
    <property type="match status" value="1"/>
</dbReference>
<dbReference type="PROSITE" id="PS00906">
    <property type="entry name" value="UROD_1"/>
    <property type="match status" value="1"/>
</dbReference>
<dbReference type="PROSITE" id="PS00907">
    <property type="entry name" value="UROD_2"/>
    <property type="match status" value="1"/>
</dbReference>
<gene>
    <name evidence="1" type="primary">hemE</name>
    <name type="ordered locus">SeAg_B4411</name>
</gene>
<comment type="function">
    <text evidence="1">Catalyzes the decarboxylation of four acetate groups of uroporphyrinogen-III to yield coproporphyrinogen-III.</text>
</comment>
<comment type="catalytic activity">
    <reaction evidence="1">
        <text>uroporphyrinogen III + 4 H(+) = coproporphyrinogen III + 4 CO2</text>
        <dbReference type="Rhea" id="RHEA:19865"/>
        <dbReference type="ChEBI" id="CHEBI:15378"/>
        <dbReference type="ChEBI" id="CHEBI:16526"/>
        <dbReference type="ChEBI" id="CHEBI:57308"/>
        <dbReference type="ChEBI" id="CHEBI:57309"/>
        <dbReference type="EC" id="4.1.1.37"/>
    </reaction>
</comment>
<comment type="pathway">
    <text evidence="1">Porphyrin-containing compound metabolism; protoporphyrin-IX biosynthesis; coproporphyrinogen-III from 5-aminolevulinate: step 4/4.</text>
</comment>
<comment type="subunit">
    <text evidence="1">Homodimer.</text>
</comment>
<comment type="subcellular location">
    <subcellularLocation>
        <location evidence="1">Cytoplasm</location>
    </subcellularLocation>
</comment>
<comment type="similarity">
    <text evidence="1">Belongs to the uroporphyrinogen decarboxylase family.</text>
</comment>
<evidence type="ECO:0000255" key="1">
    <source>
        <dbReference type="HAMAP-Rule" id="MF_00218"/>
    </source>
</evidence>
<accession>B5F1I0</accession>